<name>HBEGF_CHLAE</name>
<protein>
    <recommendedName>
        <fullName>Proheparin-binding EGF-like growth factor</fullName>
    </recommendedName>
    <component>
        <recommendedName>
            <fullName>Heparin-binding EGF-like growth factor</fullName>
            <shortName>HB-EGF</shortName>
            <shortName>HBEGF</shortName>
        </recommendedName>
        <alternativeName>
            <fullName>Diphtheria toxin receptor</fullName>
            <shortName>DT-R</shortName>
        </alternativeName>
    </component>
</protein>
<comment type="function">
    <text evidence="1">Growth factor that mediates its effects via EGFR, ERBB2 and ERBB4. Required for normal cardiac valve formation and normal heart function. Promotes smooth muscle cell proliferation. May be involved in macrophage-mediated cellular proliferation. It is mitogenic for fibroblasts, but not endothelial cells. It is able to bind EGF receptor/EGFR with higher affinity than EGF itself and is a far more potent mitogen for smooth muscle cells than EGF. Also acts as a diphtheria toxin receptor (By similarity).</text>
</comment>
<comment type="subunit">
    <text evidence="1 5">Interacts with EGFR and ERBB4 (By similarity). Interacts with FBLN1.</text>
</comment>
<comment type="subcellular location">
    <molecule>Heparin-binding EGF-like growth factor</molecule>
    <subcellularLocation>
        <location evidence="1">Secreted</location>
        <location evidence="1">Extracellular space</location>
    </subcellularLocation>
    <text evidence="1">Mature HB-EGF is released into the extracellular space and probably binds to a receptor.</text>
</comment>
<comment type="subcellular location">
    <molecule>Proheparin-binding EGF-like growth factor</molecule>
    <subcellularLocation>
        <location evidence="1">Cell membrane</location>
        <topology evidence="1">Single-pass type I membrane protein</topology>
    </subcellularLocation>
</comment>
<comment type="PTM">
    <text evidence="1">O-glycosylated.</text>
</comment>
<proteinExistence type="evidence at protein level"/>
<sequence length="208" mass="22985">MKLLPSVVLKLLLAAVLSALVTGESLEQLRRGLAAGTSNPDPSTGSTDQLLRLGGGRDRKVRDLQEADLDLLRVTLSSKPQALATPSKEEHGKRKKKGKGLGKKRDPCLRKYKDFCIHGECKYVKELRAPSCICHPGYHGERCHGLSLPVENRLYTYDHTTILAVVAVVLSSVCLLVIVGLLMFRYHRRGGYDVENEEKVKLGMTNSH</sequence>
<dbReference type="EMBL" id="M93012">
    <property type="status" value="NOT_ANNOTATED_CDS"/>
    <property type="molecule type" value="mRNA"/>
</dbReference>
<dbReference type="PIR" id="A41914">
    <property type="entry name" value="A41914"/>
</dbReference>
<dbReference type="SMR" id="Q09118"/>
<dbReference type="IntAct" id="Q09118">
    <property type="interactions" value="1"/>
</dbReference>
<dbReference type="MINT" id="Q09118"/>
<dbReference type="GlyCosmos" id="Q09118">
    <property type="glycosylation" value="2 sites, No reported glycans"/>
</dbReference>
<dbReference type="GO" id="GO:0005615">
    <property type="term" value="C:extracellular space"/>
    <property type="evidence" value="ECO:0007669"/>
    <property type="project" value="TreeGrafter"/>
</dbReference>
<dbReference type="GO" id="GO:0005886">
    <property type="term" value="C:plasma membrane"/>
    <property type="evidence" value="ECO:0007669"/>
    <property type="project" value="UniProtKB-SubCell"/>
</dbReference>
<dbReference type="GO" id="GO:0005154">
    <property type="term" value="F:epidermal growth factor receptor binding"/>
    <property type="evidence" value="ECO:0007669"/>
    <property type="project" value="TreeGrafter"/>
</dbReference>
<dbReference type="GO" id="GO:0008083">
    <property type="term" value="F:growth factor activity"/>
    <property type="evidence" value="ECO:0007669"/>
    <property type="project" value="UniProtKB-KW"/>
</dbReference>
<dbReference type="GO" id="GO:0008201">
    <property type="term" value="F:heparin binding"/>
    <property type="evidence" value="ECO:0007669"/>
    <property type="project" value="UniProtKB-KW"/>
</dbReference>
<dbReference type="GO" id="GO:0007173">
    <property type="term" value="P:epidermal growth factor receptor signaling pathway"/>
    <property type="evidence" value="ECO:0007669"/>
    <property type="project" value="TreeGrafter"/>
</dbReference>
<dbReference type="GO" id="GO:0008284">
    <property type="term" value="P:positive regulation of cell population proliferation"/>
    <property type="evidence" value="ECO:0007669"/>
    <property type="project" value="TreeGrafter"/>
</dbReference>
<dbReference type="FunFam" id="2.10.25.10:FF:000158">
    <property type="entry name" value="proheparin-binding EGF-like growth factor"/>
    <property type="match status" value="1"/>
</dbReference>
<dbReference type="Gene3D" id="2.10.25.10">
    <property type="entry name" value="Laminin"/>
    <property type="match status" value="1"/>
</dbReference>
<dbReference type="InterPro" id="IPR000742">
    <property type="entry name" value="EGF-like_dom"/>
</dbReference>
<dbReference type="PANTHER" id="PTHR10740:SF4">
    <property type="entry name" value="PROHEPARIN-BINDING EGF-LIKE GROWTH FACTOR"/>
    <property type="match status" value="1"/>
</dbReference>
<dbReference type="PANTHER" id="PTHR10740">
    <property type="entry name" value="TRANSFORMING GROWTH FACTOR ALPHA"/>
    <property type="match status" value="1"/>
</dbReference>
<dbReference type="SUPFAM" id="SSF57196">
    <property type="entry name" value="EGF/Laminin"/>
    <property type="match status" value="1"/>
</dbReference>
<dbReference type="PROSITE" id="PS00022">
    <property type="entry name" value="EGF_1"/>
    <property type="match status" value="1"/>
</dbReference>
<dbReference type="PROSITE" id="PS01186">
    <property type="entry name" value="EGF_2"/>
    <property type="match status" value="1"/>
</dbReference>
<dbReference type="PROSITE" id="PS50026">
    <property type="entry name" value="EGF_3"/>
    <property type="match status" value="1"/>
</dbReference>
<accession>Q09118</accession>
<feature type="signal peptide" evidence="2">
    <location>
        <begin position="1"/>
        <end position="19"/>
    </location>
</feature>
<feature type="chain" id="PRO_0000302802" description="Proheparin-binding EGF-like growth factor">
    <location>
        <begin position="20"/>
        <end position="208"/>
    </location>
</feature>
<feature type="propeptide" id="PRO_0000007608" evidence="1">
    <location>
        <begin position="20"/>
        <end position="62"/>
    </location>
</feature>
<feature type="chain" id="PRO_0000007609" description="Heparin-binding EGF-like growth factor">
    <location>
        <begin position="63"/>
        <end position="148"/>
    </location>
</feature>
<feature type="propeptide" id="PRO_0000007610" description="C-terminal" evidence="2">
    <location>
        <begin position="149"/>
        <end position="208"/>
    </location>
</feature>
<feature type="topological domain" description="Extracellular" evidence="2">
    <location>
        <begin position="20"/>
        <end position="160"/>
    </location>
</feature>
<feature type="transmembrane region" description="Helical" evidence="2">
    <location>
        <begin position="161"/>
        <end position="184"/>
    </location>
</feature>
<feature type="topological domain" description="Cytoplasmic" evidence="2">
    <location>
        <begin position="185"/>
        <end position="208"/>
    </location>
</feature>
<feature type="domain" description="EGF-like" evidence="3">
    <location>
        <begin position="104"/>
        <end position="144"/>
    </location>
</feature>
<feature type="region of interest" description="Disordered" evidence="4">
    <location>
        <begin position="34"/>
        <end position="55"/>
    </location>
</feature>
<feature type="region of interest" description="Disordered" evidence="4">
    <location>
        <begin position="81"/>
        <end position="104"/>
    </location>
</feature>
<feature type="region of interest" description="Toxin-binding domain">
    <location>
        <begin position="136"/>
        <end position="148"/>
    </location>
</feature>
<feature type="compositionally biased region" description="Polar residues" evidence="4">
    <location>
        <begin position="36"/>
        <end position="49"/>
    </location>
</feature>
<feature type="compositionally biased region" description="Basic residues" evidence="4">
    <location>
        <begin position="93"/>
        <end position="102"/>
    </location>
</feature>
<feature type="site" description="Plays a critical role in diphtheria toxin binding and toxin sensitivity">
    <location>
        <position position="141"/>
    </location>
</feature>
<feature type="glycosylation site" description="O-linked (GalNAc...) threonine" evidence="1">
    <location>
        <position position="75"/>
    </location>
</feature>
<feature type="glycosylation site" description="O-linked (GalNAc...) threonine" evidence="1">
    <location>
        <position position="85"/>
    </location>
</feature>
<feature type="disulfide bond" evidence="3">
    <location>
        <begin position="108"/>
        <end position="121"/>
    </location>
</feature>
<feature type="disulfide bond" evidence="3">
    <location>
        <begin position="116"/>
        <end position="132"/>
    </location>
</feature>
<feature type="disulfide bond" evidence="3">
    <location>
        <begin position="134"/>
        <end position="143"/>
    </location>
</feature>
<feature type="mutagenesis site" description="100-fold less sensitive to the diphtheria toxin and 12-fold decrease in toxin-binding." evidence="6">
    <original>E</original>
    <variation>H</variation>
    <location>
        <position position="141"/>
    </location>
</feature>
<evidence type="ECO:0000250" key="1"/>
<evidence type="ECO:0000255" key="2"/>
<evidence type="ECO:0000255" key="3">
    <source>
        <dbReference type="PROSITE-ProRule" id="PRU00076"/>
    </source>
</evidence>
<evidence type="ECO:0000256" key="4">
    <source>
        <dbReference type="SAM" id="MobiDB-lite"/>
    </source>
</evidence>
<evidence type="ECO:0000269" key="5">
    <source>
    </source>
</evidence>
<evidence type="ECO:0000269" key="6">
    <source>
    </source>
</evidence>
<keyword id="KW-1003">Cell membrane</keyword>
<keyword id="KW-1015">Disulfide bond</keyword>
<keyword id="KW-0245">EGF-like domain</keyword>
<keyword id="KW-0325">Glycoprotein</keyword>
<keyword id="KW-0339">Growth factor</keyword>
<keyword id="KW-0358">Heparin-binding</keyword>
<keyword id="KW-0472">Membrane</keyword>
<keyword id="KW-0675">Receptor</keyword>
<keyword id="KW-0964">Secreted</keyword>
<keyword id="KW-0732">Signal</keyword>
<keyword id="KW-0812">Transmembrane</keyword>
<keyword id="KW-1133">Transmembrane helix</keyword>
<reference key="1">
    <citation type="journal article" date="1992" name="Cell">
        <title>Expression cloning of a diphtheria toxin receptor: identity with a heparin-binding EGF-like growth factor precursor.</title>
        <authorList>
            <person name="Naglich J.G."/>
            <person name="Metherall J.E."/>
            <person name="Russel D.W."/>
            <person name="Eidels L."/>
        </authorList>
    </citation>
    <scope>NUCLEOTIDE SEQUENCE [MRNA]</scope>
</reference>
<reference key="2">
    <citation type="journal article" date="1995" name="Biochem. Biophys. Res. Commun.">
        <title>Localization of a critical diphtheria toxin-binding domain to the C-terminus of the mature heparin-binding EGF-like growth factor region of the diphtheria toxin receptor.</title>
        <authorList>
            <person name="Hooper K.P."/>
            <person name="Eidels L."/>
        </authorList>
    </citation>
    <scope>DOMAIN TOXIN BINDING</scope>
</reference>
<reference key="3">
    <citation type="journal article" date="1996" name="Biochem. Biophys. Res. Commun.">
        <title>Glutamic acid 141 of the diphtheria toxin receptor (HB-EGF precursor) is critical for toxin binding and toxin sensitivity.</title>
        <authorList>
            <person name="Hooper K.P."/>
            <person name="Eidels L."/>
        </authorList>
    </citation>
    <scope>DOMAIN TOXIN BINDING</scope>
    <scope>MUTAGENESIS OF GLU-141</scope>
</reference>
<reference key="4">
    <citation type="journal article" date="2002" name="BMC Cell Biol.">
        <title>Latent transforming growth factor beta-binding protein-3 and fibulin-1C interact with the extracellular domain of the heparin-binding EGF-like growth factor precursor.</title>
        <authorList>
            <person name="Brooke J.S."/>
            <person name="Cha J.-H."/>
            <person name="Eidels L."/>
        </authorList>
    </citation>
    <scope>INTERACTION WITH FBLN1</scope>
</reference>
<gene>
    <name type="primary">HBEGF</name>
    <name type="synonym">DTR</name>
    <name type="synonym">HEGFL</name>
</gene>
<organism>
    <name type="scientific">Chlorocebus aethiops</name>
    <name type="common">Green monkey</name>
    <name type="synonym">Cercopithecus aethiops</name>
    <dbReference type="NCBI Taxonomy" id="9534"/>
    <lineage>
        <taxon>Eukaryota</taxon>
        <taxon>Metazoa</taxon>
        <taxon>Chordata</taxon>
        <taxon>Craniata</taxon>
        <taxon>Vertebrata</taxon>
        <taxon>Euteleostomi</taxon>
        <taxon>Mammalia</taxon>
        <taxon>Eutheria</taxon>
        <taxon>Euarchontoglires</taxon>
        <taxon>Primates</taxon>
        <taxon>Haplorrhini</taxon>
        <taxon>Catarrhini</taxon>
        <taxon>Cercopithecidae</taxon>
        <taxon>Cercopithecinae</taxon>
        <taxon>Chlorocebus</taxon>
    </lineage>
</organism>